<accession>O02033</accession>
<reference key="1">
    <citation type="journal article" date="1997" name="Mol. Reprod. Dev.">
        <title>Metallothionein gene expression in embryos of the sea urchin Lytechinus pictus.</title>
        <authorList>
            <person name="Cserjesi P."/>
            <person name="Fang H."/>
            <person name="Brandhorst B.P."/>
        </authorList>
    </citation>
    <scope>NUCLEOTIDE SEQUENCE [GENOMIC DNA]</scope>
</reference>
<protein>
    <recommendedName>
        <fullName>Metallothionein</fullName>
        <shortName>MT</shortName>
    </recommendedName>
    <alternativeName>
        <fullName>LpMT1</fullName>
    </alternativeName>
</protein>
<keyword id="KW-0479">Metal-binding</keyword>
<keyword id="KW-0480">Metal-thiolate cluster</keyword>
<proteinExistence type="inferred from homology"/>
<sequence>MPGPDVKCFCCRDGKECACGGGECCITGKCCKEGDRTCCGKCSNAACKCADGCKCEGACACTMGNCTC</sequence>
<dbReference type="EMBL" id="U83401">
    <property type="protein sequence ID" value="AAB58321.1"/>
    <property type="molecule type" value="Genomic_DNA"/>
</dbReference>
<dbReference type="SMR" id="O02033"/>
<dbReference type="GO" id="GO:0046872">
    <property type="term" value="F:metal ion binding"/>
    <property type="evidence" value="ECO:0007669"/>
    <property type="project" value="UniProtKB-KW"/>
</dbReference>
<dbReference type="InterPro" id="IPR017980">
    <property type="entry name" value="Metalthion_4_echinoid/annelid"/>
</dbReference>
<dbReference type="InterPro" id="IPR001396">
    <property type="entry name" value="Metalthion_4_echinoidea"/>
</dbReference>
<dbReference type="InterPro" id="IPR017854">
    <property type="entry name" value="Metalthion_dom_sf"/>
</dbReference>
<dbReference type="Pfam" id="PF05522">
    <property type="entry name" value="Metallothio_6"/>
    <property type="match status" value="1"/>
</dbReference>
<dbReference type="PRINTS" id="PR00873">
    <property type="entry name" value="MTECHINOIDEA"/>
</dbReference>
<dbReference type="SUPFAM" id="SSF57868">
    <property type="entry name" value="Metallothionein"/>
    <property type="match status" value="2"/>
</dbReference>
<name>MT_LYTPI</name>
<comment type="function">
    <text>Metallothioneins have a high content of cysteine residues that bind various heavy metals.</text>
</comment>
<comment type="similarity">
    <text evidence="1">Belongs to the metallothionein superfamily. Type 4 family.</text>
</comment>
<gene>
    <name type="primary">MT1</name>
</gene>
<organism>
    <name type="scientific">Lytechinus pictus</name>
    <name type="common">Painted sea urchin</name>
    <dbReference type="NCBI Taxonomy" id="7653"/>
    <lineage>
        <taxon>Eukaryota</taxon>
        <taxon>Metazoa</taxon>
        <taxon>Echinodermata</taxon>
        <taxon>Eleutherozoa</taxon>
        <taxon>Echinozoa</taxon>
        <taxon>Echinoidea</taxon>
        <taxon>Euechinoidea</taxon>
        <taxon>Echinacea</taxon>
        <taxon>Temnopleuroida</taxon>
        <taxon>Toxopneustidae</taxon>
        <taxon>Lytechinus</taxon>
    </lineage>
</organism>
<evidence type="ECO:0000305" key="1"/>
<feature type="chain" id="PRO_0000197345" description="Metallothionein">
    <location>
        <begin position="1"/>
        <end position="68"/>
    </location>
</feature>